<feature type="chain" id="PRO_0000171257" description="Chloromuconate cycloisomerase">
    <location>
        <begin position="1"/>
        <end position="372"/>
    </location>
</feature>
<feature type="active site" description="Proton acceptor" evidence="1">
    <location>
        <position position="158"/>
    </location>
</feature>
<feature type="active site" description="Proton donor" evidence="1">
    <location>
        <position position="316"/>
    </location>
</feature>
<feature type="binding site" evidence="1">
    <location>
        <position position="187"/>
    </location>
    <ligand>
        <name>Mn(2+)</name>
        <dbReference type="ChEBI" id="CHEBI:29035"/>
    </ligand>
</feature>
<feature type="binding site" evidence="1">
    <location>
        <position position="213"/>
    </location>
    <ligand>
        <name>Mn(2+)</name>
        <dbReference type="ChEBI" id="CHEBI:29035"/>
    </ligand>
</feature>
<feature type="binding site" evidence="1">
    <location>
        <position position="238"/>
    </location>
    <ligand>
        <name>Mn(2+)</name>
        <dbReference type="ChEBI" id="CHEBI:29035"/>
    </ligand>
</feature>
<feature type="sequence conflict" description="In Ref. 3; AAA65064." evidence="2" ref="3">
    <original>A</original>
    <variation>G</variation>
    <location>
        <position position="65"/>
    </location>
</feature>
<feature type="sequence conflict" description="In Ref. 3." evidence="2" ref="3">
    <original>A</original>
    <variation>D</variation>
    <location>
        <position position="93"/>
    </location>
</feature>
<feature type="sequence conflict" description="In Ref. 3; AAA65064." evidence="2" ref="3">
    <original>LEGKASLRVDPNEAWDEPTTMRAL</original>
    <variation>TRGQDEPAPSIPTKRGTSRPRCGT</variation>
    <location>
        <begin position="178"/>
        <end position="201"/>
    </location>
</feature>
<feature type="sequence conflict" description="In Ref. 3; AAA65064." evidence="2" ref="3">
    <original>GVEI</original>
    <variation>AWKF</variation>
    <location>
        <begin position="208"/>
        <end position="211"/>
    </location>
</feature>
<keyword id="KW-0058">Aromatic hydrocarbons catabolism</keyword>
<keyword id="KW-0413">Isomerase</keyword>
<keyword id="KW-0464">Manganese</keyword>
<keyword id="KW-0479">Metal-binding</keyword>
<keyword id="KW-0614">Plasmid</keyword>
<reference key="1">
    <citation type="journal article" date="2004" name="Environ. Microbiol.">
        <title>Genetic organization of the catabolic plasmid pJP4 from Ralstonia eutropha JMP134 (pJP4) reveals mechanisms of adaptation to chloroaromatic pollutants and evolution of specialized chloroaromatic degradation pathways.</title>
        <authorList>
            <person name="Trefault N."/>
            <person name="De la Iglesia R."/>
            <person name="Molina A.M."/>
            <person name="Manzano M."/>
            <person name="Ledger T."/>
            <person name="Perez-Pantoja D."/>
            <person name="Sanchez M.A."/>
            <person name="Stuardo M."/>
            <person name="Gonzalez B."/>
        </authorList>
    </citation>
    <scope>NUCLEOTIDE SEQUENCE [GENOMIC DNA]</scope>
    <source>
        <plasmid>pJP4</plasmid>
    </source>
</reference>
<reference key="2">
    <citation type="journal article" date="2010" name="PLoS ONE">
        <title>The complete multipartite genome sequence of Cupriavidus necator JMP134, a versatile pollutant degrader.</title>
        <authorList>
            <person name="Lykidis A."/>
            <person name="Perez-Pantoja D."/>
            <person name="Ledger T."/>
            <person name="Mavromatis K."/>
            <person name="Anderson I.J."/>
            <person name="Ivanova N.N."/>
            <person name="Hooper S.D."/>
            <person name="Lapidus A."/>
            <person name="Lucas S."/>
            <person name="Gonzalez B."/>
            <person name="Kyrpides N.C."/>
        </authorList>
    </citation>
    <scope>NUCLEOTIDE SEQUENCE [LARGE SCALE GENOMIC DNA]</scope>
    <source>
        <strain>JMP134 / LMG 1197</strain>
        <plasmid>pPJ4</plasmid>
    </source>
</reference>
<reference key="3">
    <citation type="journal article" date="1994" name="J. Bacteriol.">
        <title>Analysis of duplicated gene sequences associated with tfdR and tfdS in Alcaligenes eutrophus JMP134.</title>
        <authorList>
            <person name="Matrubutham U."/>
            <person name="Harker A.R."/>
        </authorList>
    </citation>
    <scope>NUCLEOTIDE SEQUENCE [GENOMIC DNA] OF 1-234</scope>
    <source>
        <plasmid>pJP4</plasmid>
    </source>
</reference>
<dbReference type="EC" id="5.5.1.7"/>
<dbReference type="EMBL" id="AY365053">
    <property type="protein sequence ID" value="AAR31047.1"/>
    <property type="molecule type" value="Genomic_DNA"/>
</dbReference>
<dbReference type="EMBL" id="CP000093">
    <property type="protein sequence ID" value="AAZ65772.1"/>
    <property type="status" value="ALT_INIT"/>
    <property type="molecule type" value="Genomic_DNA"/>
</dbReference>
<dbReference type="EMBL" id="M98445">
    <property type="protein sequence ID" value="AAA65064.1"/>
    <property type="status" value="ALT_FRAME"/>
    <property type="molecule type" value="Genomic_DNA"/>
</dbReference>
<dbReference type="SMR" id="P42428"/>
<dbReference type="KEGG" id="reu:Reut_D6474"/>
<dbReference type="HOGENOM" id="CLU_030273_4_5_4"/>
<dbReference type="BioCyc" id="MetaCyc:MONOMER-14413"/>
<dbReference type="UniPathway" id="UPA00083"/>
<dbReference type="GO" id="GO:0018850">
    <property type="term" value="F:chloromuconate cycloisomerase activity"/>
    <property type="evidence" value="ECO:0007669"/>
    <property type="project" value="UniProtKB-EC"/>
</dbReference>
<dbReference type="GO" id="GO:0030145">
    <property type="term" value="F:manganese ion binding"/>
    <property type="evidence" value="ECO:0007669"/>
    <property type="project" value="InterPro"/>
</dbReference>
<dbReference type="GO" id="GO:0018849">
    <property type="term" value="F:muconate cycloisomerase activity"/>
    <property type="evidence" value="ECO:0007669"/>
    <property type="project" value="InterPro"/>
</dbReference>
<dbReference type="GO" id="GO:0009063">
    <property type="term" value="P:amino acid catabolic process"/>
    <property type="evidence" value="ECO:0007669"/>
    <property type="project" value="InterPro"/>
</dbReference>
<dbReference type="CDD" id="cd03318">
    <property type="entry name" value="MLE"/>
    <property type="match status" value="1"/>
</dbReference>
<dbReference type="Gene3D" id="3.20.20.120">
    <property type="entry name" value="Enolase-like C-terminal domain"/>
    <property type="match status" value="1"/>
</dbReference>
<dbReference type="Gene3D" id="3.30.390.10">
    <property type="entry name" value="Enolase-like, N-terminal domain"/>
    <property type="match status" value="1"/>
</dbReference>
<dbReference type="InterPro" id="IPR013370">
    <property type="entry name" value="Chloromuconate_cycloisomerase"/>
</dbReference>
<dbReference type="InterPro" id="IPR036849">
    <property type="entry name" value="Enolase-like_C_sf"/>
</dbReference>
<dbReference type="InterPro" id="IPR029017">
    <property type="entry name" value="Enolase-like_N"/>
</dbReference>
<dbReference type="InterPro" id="IPR029065">
    <property type="entry name" value="Enolase_C-like"/>
</dbReference>
<dbReference type="InterPro" id="IPR018110">
    <property type="entry name" value="Mandel_Rmase/mucon_lact_enz_CS"/>
</dbReference>
<dbReference type="InterPro" id="IPR013342">
    <property type="entry name" value="Mandelate_racemase_C"/>
</dbReference>
<dbReference type="InterPro" id="IPR013341">
    <property type="entry name" value="Mandelate_racemase_N_dom"/>
</dbReference>
<dbReference type="NCBIfam" id="TIGR02534">
    <property type="entry name" value="mucon_cyclo"/>
    <property type="match status" value="1"/>
</dbReference>
<dbReference type="PANTHER" id="PTHR48073:SF2">
    <property type="entry name" value="O-SUCCINYLBENZOATE SYNTHASE"/>
    <property type="match status" value="1"/>
</dbReference>
<dbReference type="PANTHER" id="PTHR48073">
    <property type="entry name" value="O-SUCCINYLBENZOATE SYNTHASE-RELATED"/>
    <property type="match status" value="1"/>
</dbReference>
<dbReference type="Pfam" id="PF13378">
    <property type="entry name" value="MR_MLE_C"/>
    <property type="match status" value="1"/>
</dbReference>
<dbReference type="Pfam" id="PF02746">
    <property type="entry name" value="MR_MLE_N"/>
    <property type="match status" value="1"/>
</dbReference>
<dbReference type="SFLD" id="SFLDG01258">
    <property type="entry name" value="(chloro)muconate_cycloisomeras"/>
    <property type="match status" value="1"/>
</dbReference>
<dbReference type="SFLD" id="SFLDG00180">
    <property type="entry name" value="muconate_cycloisomerase"/>
    <property type="match status" value="1"/>
</dbReference>
<dbReference type="SMART" id="SM00922">
    <property type="entry name" value="MR_MLE"/>
    <property type="match status" value="1"/>
</dbReference>
<dbReference type="SUPFAM" id="SSF51604">
    <property type="entry name" value="Enolase C-terminal domain-like"/>
    <property type="match status" value="1"/>
</dbReference>
<dbReference type="SUPFAM" id="SSF54826">
    <property type="entry name" value="Enolase N-terminal domain-like"/>
    <property type="match status" value="1"/>
</dbReference>
<dbReference type="PROSITE" id="PS00908">
    <property type="entry name" value="MR_MLE_1"/>
    <property type="match status" value="1"/>
</dbReference>
<comment type="catalytic activity">
    <reaction>
        <text>2-[(2R)-2-chloro-2,5-dihydro-5-oxofuryl]acetate = 3-chloro-cis,cis-muconate + H(+)</text>
        <dbReference type="Rhea" id="RHEA:11032"/>
        <dbReference type="ChEBI" id="CHEBI:15378"/>
        <dbReference type="ChEBI" id="CHEBI:17589"/>
        <dbReference type="ChEBI" id="CHEBI:85538"/>
        <dbReference type="EC" id="5.5.1.7"/>
    </reaction>
</comment>
<comment type="cofactor">
    <cofactor evidence="1">
        <name>Mn(2+)</name>
        <dbReference type="ChEBI" id="CHEBI:29035"/>
    </cofactor>
</comment>
<comment type="pathway">
    <text>Aromatic compound metabolism; 3-chlorocatechol degradation.</text>
</comment>
<comment type="similarity">
    <text evidence="2">Belongs to the mandelate racemase/muconate lactonizing enzyme family.</text>
</comment>
<comment type="sequence caution" evidence="2">
    <conflict type="frameshift">
        <sequence resource="EMBL-CDS" id="AAA65064"/>
    </conflict>
</comment>
<comment type="sequence caution" evidence="2">
    <conflict type="erroneous initiation">
        <sequence resource="EMBL-CDS" id="AAZ65772"/>
    </conflict>
</comment>
<protein>
    <recommendedName>
        <fullName>Chloromuconate cycloisomerase</fullName>
        <ecNumber>5.5.1.7</ecNumber>
    </recommendedName>
    <alternativeName>
        <fullName>Muconate cycloisomerase II</fullName>
    </alternativeName>
</protein>
<gene>
    <name type="primary">tfdDII</name>
    <name type="synonym">tfdD2</name>
    <name type="ordered locus">Reut_D6474</name>
</gene>
<accession>P42428</accession>
<accession>Q46M58</accession>
<accession>Q6UP90</accession>
<proteinExistence type="inferred from homology"/>
<evidence type="ECO:0000250" key="1"/>
<evidence type="ECO:0000305" key="2"/>
<geneLocation type="plasmid">
    <name>pJP4</name>
</geneLocation>
<geneLocation type="plasmid">
    <name>pPJ4</name>
</geneLocation>
<name>TFDD2_CUPPJ</name>
<sequence>MIVDLPLRRIQQFARLGAKHQSSVLIRLHTKGGIVGIGESITPCGPWWSGDSVEAIQATINHYLAPLVVGEPALDASRIMAKLHGRVAGNAFAKAGIEMALLDAVGKIVDAPIHVLLGGRFRDRLSVAWPLATGDVNQEVDEAFRMLEAGKAGAFKLKMGALPLAQDLRRALAIAKELEGKASLRVDPNEAWDEPTTMRALAPLEAAGVEIIEQPVARWNLDAMARIHRQARSMLLIDEGVQSLHDASEVVKRAAAGLVSLKIMKTGGMRPARAMADIANAGGMHVYMGTFLETSIGTAANMQLAASIESLPYGGEVIGPLLIEEDLCEVPAVYKEHALWLPEGPGLGIRLDENQVRRFARASSQRIDRHSA</sequence>
<organism>
    <name type="scientific">Cupriavidus pinatubonensis (strain JMP 134 / LMG 1197)</name>
    <name type="common">Cupriavidus necator (strain JMP 134)</name>
    <dbReference type="NCBI Taxonomy" id="264198"/>
    <lineage>
        <taxon>Bacteria</taxon>
        <taxon>Pseudomonadati</taxon>
        <taxon>Pseudomonadota</taxon>
        <taxon>Betaproteobacteria</taxon>
        <taxon>Burkholderiales</taxon>
        <taxon>Burkholderiaceae</taxon>
        <taxon>Cupriavidus</taxon>
    </lineage>
</organism>